<organism>
    <name type="scientific">Ranoidea chloris</name>
    <name type="common">Red-eyed tree frog</name>
    <name type="synonym">Litoria chloris</name>
    <dbReference type="NCBI Taxonomy" id="86064"/>
    <lineage>
        <taxon>Eukaryota</taxon>
        <taxon>Metazoa</taxon>
        <taxon>Chordata</taxon>
        <taxon>Craniata</taxon>
        <taxon>Vertebrata</taxon>
        <taxon>Euteleostomi</taxon>
        <taxon>Amphibia</taxon>
        <taxon>Batrachia</taxon>
        <taxon>Anura</taxon>
        <taxon>Neobatrachia</taxon>
        <taxon>Hyloidea</taxon>
        <taxon>Hylidae</taxon>
        <taxon>Pelodryadinae</taxon>
        <taxon>Ranoidea</taxon>
    </lineage>
</organism>
<feature type="peptide" id="PRO_0000043755" description="Caeridin-1.1/1.2/1.3">
    <location>
        <begin position="1"/>
        <end position="12"/>
    </location>
</feature>
<feature type="modified residue" description="Leucine amide" evidence="2">
    <location>
        <position position="12"/>
    </location>
</feature>
<comment type="function">
    <text>Caeridins show neither neuropeptide activity nor antibiotic activity.</text>
</comment>
<comment type="subcellular location">
    <subcellularLocation>
        <location>Secreted</location>
    </subcellularLocation>
</comment>
<comment type="tissue specificity">
    <text>Expressed by the skin glands.</text>
</comment>
<comment type="PTM">
    <text evidence="1">Isomerization alpha-beta of the Asp-4 residue in caeridin 1.2; a cyclic succinimide may be formed between Asp-4 and Gly-5 residues in caeridin 1.3.</text>
</comment>
<protein>
    <recommendedName>
        <fullName>Caeridin-1.1/1.2/1.3</fullName>
    </recommendedName>
</protein>
<keyword id="KW-0027">Amidation</keyword>
<keyword id="KW-0878">Amphibian defense peptide</keyword>
<keyword id="KW-0903">Direct protein sequencing</keyword>
<keyword id="KW-0964">Secreted</keyword>
<reference key="1">
    <citation type="journal article" date="1998" name="J. Pept. Res.">
        <title>New antibiotic caerin 1 peptides from the skin secretion of the Australian tree frog Litoria chloris. Comparison of the activities of the caerin 1 peptides from the genus Litoria.</title>
        <authorList>
            <person name="Steinborner S.T."/>
            <person name="Currie G.J."/>
            <person name="Bowie J.H."/>
            <person name="Wallace J.C."/>
            <person name="Tyler M.J."/>
        </authorList>
    </citation>
    <scope>PROTEIN SEQUENCE</scope>
    <scope>AMIDATION AT LEU-12</scope>
    <source>
        <tissue>Skin secretion</tissue>
    </source>
</reference>
<evidence type="ECO:0000250" key="1"/>
<evidence type="ECO:0000269" key="2">
    <source>
    </source>
</evidence>
<name>CDN11_RANCH</name>
<proteinExistence type="evidence at protein level"/>
<sequence>GLLDGLLGTLGL</sequence>
<dbReference type="GO" id="GO:0005576">
    <property type="term" value="C:extracellular region"/>
    <property type="evidence" value="ECO:0007669"/>
    <property type="project" value="UniProtKB-SubCell"/>
</dbReference>
<dbReference type="GO" id="GO:0006952">
    <property type="term" value="P:defense response"/>
    <property type="evidence" value="ECO:0007669"/>
    <property type="project" value="UniProtKB-KW"/>
</dbReference>
<accession>P62567</accession>
<accession>P56245</accession>
<accession>P81253</accession>